<gene>
    <name evidence="1" type="primary">rplP</name>
    <name type="ordered locus">BamMC406_0283</name>
</gene>
<reference key="1">
    <citation type="submission" date="2008-04" db="EMBL/GenBank/DDBJ databases">
        <title>Complete sequence of chromosome 1 of Burkholderia ambifaria MC40-6.</title>
        <authorList>
            <person name="Copeland A."/>
            <person name="Lucas S."/>
            <person name="Lapidus A."/>
            <person name="Glavina del Rio T."/>
            <person name="Dalin E."/>
            <person name="Tice H."/>
            <person name="Pitluck S."/>
            <person name="Chain P."/>
            <person name="Malfatti S."/>
            <person name="Shin M."/>
            <person name="Vergez L."/>
            <person name="Lang D."/>
            <person name="Schmutz J."/>
            <person name="Larimer F."/>
            <person name="Land M."/>
            <person name="Hauser L."/>
            <person name="Kyrpides N."/>
            <person name="Lykidis A."/>
            <person name="Ramette A."/>
            <person name="Konstantinidis K."/>
            <person name="Tiedje J."/>
            <person name="Richardson P."/>
        </authorList>
    </citation>
    <scope>NUCLEOTIDE SEQUENCE [LARGE SCALE GENOMIC DNA]</scope>
    <source>
        <strain>MC40-6</strain>
    </source>
</reference>
<sequence length="138" mass="15582">MLQPKRRKYRKEQKGRNTGKATRGNAVSFGDFGLKAIGRGRLTARQIEAARRAMTRHIKRGGRIWIRIFPDKPISQKPAEVRMGNGKGNPEYYVAEIQPGKMLYEMDGVTEELAREAFRLAAAKLPLKTAFIVRQLGA</sequence>
<proteinExistence type="inferred from homology"/>
<accession>B1YRD7</accession>
<comment type="function">
    <text evidence="1">Binds 23S rRNA and is also seen to make contacts with the A and possibly P site tRNAs.</text>
</comment>
<comment type="subunit">
    <text evidence="1">Part of the 50S ribosomal subunit.</text>
</comment>
<comment type="similarity">
    <text evidence="1">Belongs to the universal ribosomal protein uL16 family.</text>
</comment>
<dbReference type="EMBL" id="CP001025">
    <property type="protein sequence ID" value="ACB62784.1"/>
    <property type="molecule type" value="Genomic_DNA"/>
</dbReference>
<dbReference type="RefSeq" id="WP_006752927.1">
    <property type="nucleotide sequence ID" value="NC_010551.1"/>
</dbReference>
<dbReference type="SMR" id="B1YRD7"/>
<dbReference type="GeneID" id="93143355"/>
<dbReference type="KEGG" id="bac:BamMC406_0283"/>
<dbReference type="HOGENOM" id="CLU_078858_2_1_4"/>
<dbReference type="OrthoDB" id="9802589at2"/>
<dbReference type="Proteomes" id="UP000001680">
    <property type="component" value="Chromosome 1"/>
</dbReference>
<dbReference type="GO" id="GO:0022625">
    <property type="term" value="C:cytosolic large ribosomal subunit"/>
    <property type="evidence" value="ECO:0007669"/>
    <property type="project" value="TreeGrafter"/>
</dbReference>
<dbReference type="GO" id="GO:0019843">
    <property type="term" value="F:rRNA binding"/>
    <property type="evidence" value="ECO:0007669"/>
    <property type="project" value="UniProtKB-UniRule"/>
</dbReference>
<dbReference type="GO" id="GO:0003735">
    <property type="term" value="F:structural constituent of ribosome"/>
    <property type="evidence" value="ECO:0007669"/>
    <property type="project" value="InterPro"/>
</dbReference>
<dbReference type="GO" id="GO:0000049">
    <property type="term" value="F:tRNA binding"/>
    <property type="evidence" value="ECO:0007669"/>
    <property type="project" value="UniProtKB-KW"/>
</dbReference>
<dbReference type="GO" id="GO:0006412">
    <property type="term" value="P:translation"/>
    <property type="evidence" value="ECO:0007669"/>
    <property type="project" value="UniProtKB-UniRule"/>
</dbReference>
<dbReference type="CDD" id="cd01433">
    <property type="entry name" value="Ribosomal_L16_L10e"/>
    <property type="match status" value="1"/>
</dbReference>
<dbReference type="FunFam" id="3.90.1170.10:FF:000001">
    <property type="entry name" value="50S ribosomal protein L16"/>
    <property type="match status" value="1"/>
</dbReference>
<dbReference type="Gene3D" id="3.90.1170.10">
    <property type="entry name" value="Ribosomal protein L10e/L16"/>
    <property type="match status" value="1"/>
</dbReference>
<dbReference type="HAMAP" id="MF_01342">
    <property type="entry name" value="Ribosomal_uL16"/>
    <property type="match status" value="1"/>
</dbReference>
<dbReference type="InterPro" id="IPR047873">
    <property type="entry name" value="Ribosomal_uL16"/>
</dbReference>
<dbReference type="InterPro" id="IPR000114">
    <property type="entry name" value="Ribosomal_uL16_bact-type"/>
</dbReference>
<dbReference type="InterPro" id="IPR020798">
    <property type="entry name" value="Ribosomal_uL16_CS"/>
</dbReference>
<dbReference type="InterPro" id="IPR016180">
    <property type="entry name" value="Ribosomal_uL16_dom"/>
</dbReference>
<dbReference type="InterPro" id="IPR036920">
    <property type="entry name" value="Ribosomal_uL16_sf"/>
</dbReference>
<dbReference type="NCBIfam" id="TIGR01164">
    <property type="entry name" value="rplP_bact"/>
    <property type="match status" value="1"/>
</dbReference>
<dbReference type="PANTHER" id="PTHR12220">
    <property type="entry name" value="50S/60S RIBOSOMAL PROTEIN L16"/>
    <property type="match status" value="1"/>
</dbReference>
<dbReference type="PANTHER" id="PTHR12220:SF13">
    <property type="entry name" value="LARGE RIBOSOMAL SUBUNIT PROTEIN UL16M"/>
    <property type="match status" value="1"/>
</dbReference>
<dbReference type="Pfam" id="PF00252">
    <property type="entry name" value="Ribosomal_L16"/>
    <property type="match status" value="1"/>
</dbReference>
<dbReference type="PRINTS" id="PR00060">
    <property type="entry name" value="RIBOSOMALL16"/>
</dbReference>
<dbReference type="SUPFAM" id="SSF54686">
    <property type="entry name" value="Ribosomal protein L16p/L10e"/>
    <property type="match status" value="1"/>
</dbReference>
<dbReference type="PROSITE" id="PS00586">
    <property type="entry name" value="RIBOSOMAL_L16_1"/>
    <property type="match status" value="1"/>
</dbReference>
<name>RL16_BURA4</name>
<keyword id="KW-0687">Ribonucleoprotein</keyword>
<keyword id="KW-0689">Ribosomal protein</keyword>
<keyword id="KW-0694">RNA-binding</keyword>
<keyword id="KW-0699">rRNA-binding</keyword>
<keyword id="KW-0820">tRNA-binding</keyword>
<feature type="chain" id="PRO_1000142935" description="Large ribosomal subunit protein uL16">
    <location>
        <begin position="1"/>
        <end position="138"/>
    </location>
</feature>
<feature type="region of interest" description="Disordered" evidence="2">
    <location>
        <begin position="1"/>
        <end position="24"/>
    </location>
</feature>
<feature type="compositionally biased region" description="Basic residues" evidence="2">
    <location>
        <begin position="1"/>
        <end position="13"/>
    </location>
</feature>
<evidence type="ECO:0000255" key="1">
    <source>
        <dbReference type="HAMAP-Rule" id="MF_01342"/>
    </source>
</evidence>
<evidence type="ECO:0000256" key="2">
    <source>
        <dbReference type="SAM" id="MobiDB-lite"/>
    </source>
</evidence>
<evidence type="ECO:0000305" key="3"/>
<organism>
    <name type="scientific">Burkholderia ambifaria (strain MC40-6)</name>
    <dbReference type="NCBI Taxonomy" id="398577"/>
    <lineage>
        <taxon>Bacteria</taxon>
        <taxon>Pseudomonadati</taxon>
        <taxon>Pseudomonadota</taxon>
        <taxon>Betaproteobacteria</taxon>
        <taxon>Burkholderiales</taxon>
        <taxon>Burkholderiaceae</taxon>
        <taxon>Burkholderia</taxon>
        <taxon>Burkholderia cepacia complex</taxon>
    </lineage>
</organism>
<protein>
    <recommendedName>
        <fullName evidence="1">Large ribosomal subunit protein uL16</fullName>
    </recommendedName>
    <alternativeName>
        <fullName evidence="3">50S ribosomal protein L16</fullName>
    </alternativeName>
</protein>